<reference key="1">
    <citation type="journal article" date="1990" name="J. Bacteriol.">
        <title>Molecular comparison of a nonhemolytic and a hemolytic phospholipase C from Pseudomonas aeruginosa.</title>
        <authorList>
            <person name="Ostroff R.M."/>
            <person name="Vasil A.I."/>
            <person name="Vasil M.L."/>
        </authorList>
    </citation>
    <scope>NUCLEOTIDE SEQUENCE [GENOMIC DNA]</scope>
</reference>
<reference key="2">
    <citation type="journal article" date="2000" name="Nature">
        <title>Complete genome sequence of Pseudomonas aeruginosa PAO1, an opportunistic pathogen.</title>
        <authorList>
            <person name="Stover C.K."/>
            <person name="Pham X.-Q.T."/>
            <person name="Erwin A.L."/>
            <person name="Mizoguchi S.D."/>
            <person name="Warrener P."/>
            <person name="Hickey M.J."/>
            <person name="Brinkman F.S.L."/>
            <person name="Hufnagle W.O."/>
            <person name="Kowalik D.J."/>
            <person name="Lagrou M."/>
            <person name="Garber R.L."/>
            <person name="Goltry L."/>
            <person name="Tolentino E."/>
            <person name="Westbrock-Wadman S."/>
            <person name="Yuan Y."/>
            <person name="Brody L.L."/>
            <person name="Coulter S.N."/>
            <person name="Folger K.R."/>
            <person name="Kas A."/>
            <person name="Larbig K."/>
            <person name="Lim R.M."/>
            <person name="Smith K.A."/>
            <person name="Spencer D.H."/>
            <person name="Wong G.K.-S."/>
            <person name="Wu Z."/>
            <person name="Paulsen I.T."/>
            <person name="Reizer J."/>
            <person name="Saier M.H. Jr."/>
            <person name="Hancock R.E.W."/>
            <person name="Lory S."/>
            <person name="Olson M.V."/>
        </authorList>
    </citation>
    <scope>NUCLEOTIDE SEQUENCE [LARGE SCALE GENOMIC DNA]</scope>
    <source>
        <strain>ATCC 15692 / DSM 22644 / CIP 104116 / JCM 14847 / LMG 12228 / 1C / PRS 101 / PAO1</strain>
    </source>
</reference>
<keyword id="KW-0378">Hydrolase</keyword>
<keyword id="KW-1185">Reference proteome</keyword>
<keyword id="KW-0732">Signal</keyword>
<name>PHLN_PSEAE</name>
<gene>
    <name type="primary">plcN</name>
    <name type="ordered locus">PA3319</name>
</gene>
<protein>
    <recommendedName>
        <fullName>Non-hemolytic phospholipase C</fullName>
        <ecNumber>3.1.4.3</ecNumber>
    </recommendedName>
    <alternativeName>
        <fullName>PLC-N</fullName>
    </alternativeName>
    <alternativeName>
        <fullName>Phosphatidylcholine cholinephosphohydrolase</fullName>
    </alternativeName>
    <alternativeName>
        <fullName>Phosphatidylcholine-hydrolyzing phospholipase C</fullName>
        <shortName>PC-PLC</shortName>
    </alternativeName>
</protein>
<organism>
    <name type="scientific">Pseudomonas aeruginosa (strain ATCC 15692 / DSM 22644 / CIP 104116 / JCM 14847 / LMG 12228 / 1C / PRS 101 / PAO1)</name>
    <dbReference type="NCBI Taxonomy" id="208964"/>
    <lineage>
        <taxon>Bacteria</taxon>
        <taxon>Pseudomonadati</taxon>
        <taxon>Pseudomonadota</taxon>
        <taxon>Gammaproteobacteria</taxon>
        <taxon>Pseudomonadales</taxon>
        <taxon>Pseudomonadaceae</taxon>
        <taxon>Pseudomonas</taxon>
    </lineage>
</organism>
<dbReference type="EC" id="3.1.4.3"/>
<dbReference type="EMBL" id="M59304">
    <property type="protein sequence ID" value="AAA25968.1"/>
    <property type="molecule type" value="Genomic_DNA"/>
</dbReference>
<dbReference type="EMBL" id="M30223">
    <property type="protein sequence ID" value="AAA25969.1"/>
    <property type="molecule type" value="Genomic_DNA"/>
</dbReference>
<dbReference type="EMBL" id="AE004091">
    <property type="protein sequence ID" value="AAG06707.1"/>
    <property type="molecule type" value="Genomic_DNA"/>
</dbReference>
<dbReference type="PIR" id="A36143">
    <property type="entry name" value="A36143"/>
</dbReference>
<dbReference type="PIR" id="E83230">
    <property type="entry name" value="E83230"/>
</dbReference>
<dbReference type="RefSeq" id="NP_252009.1">
    <property type="nucleotide sequence ID" value="NC_002516.2"/>
</dbReference>
<dbReference type="RefSeq" id="WP_003113149.1">
    <property type="nucleotide sequence ID" value="NZ_QZGE01000017.1"/>
</dbReference>
<dbReference type="SMR" id="P15713"/>
<dbReference type="STRING" id="208964.PA3319"/>
<dbReference type="PaxDb" id="208964-PA3319"/>
<dbReference type="GeneID" id="882484"/>
<dbReference type="KEGG" id="pae:PA3319"/>
<dbReference type="PATRIC" id="fig|208964.12.peg.3476"/>
<dbReference type="PseudoCAP" id="PA3319"/>
<dbReference type="HOGENOM" id="CLU_008770_1_0_6"/>
<dbReference type="InParanoid" id="P15713"/>
<dbReference type="OrthoDB" id="9770871at2"/>
<dbReference type="PhylomeDB" id="P15713"/>
<dbReference type="BioCyc" id="PAER208964:G1FZ6-3383-MONOMER"/>
<dbReference type="Proteomes" id="UP000002438">
    <property type="component" value="Chromosome"/>
</dbReference>
<dbReference type="GO" id="GO:0016298">
    <property type="term" value="F:lipase activity"/>
    <property type="evidence" value="ECO:0000314"/>
    <property type="project" value="PseudoCAP"/>
</dbReference>
<dbReference type="GO" id="GO:0034480">
    <property type="term" value="F:phosphatidylcholine phospholipase C activity"/>
    <property type="evidence" value="ECO:0007669"/>
    <property type="project" value="UniProtKB-EC"/>
</dbReference>
<dbReference type="GO" id="GO:0016042">
    <property type="term" value="P:lipid catabolic process"/>
    <property type="evidence" value="ECO:0007669"/>
    <property type="project" value="InterPro"/>
</dbReference>
<dbReference type="GO" id="GO:0015628">
    <property type="term" value="P:protein secretion by the type II secretion system"/>
    <property type="evidence" value="ECO:0000314"/>
    <property type="project" value="PseudoCAP"/>
</dbReference>
<dbReference type="CDD" id="cd16014">
    <property type="entry name" value="PLC"/>
    <property type="match status" value="1"/>
</dbReference>
<dbReference type="FunFam" id="3.40.720.10:FF:000034">
    <property type="entry name" value="Membrane-associated phospholipase C"/>
    <property type="match status" value="1"/>
</dbReference>
<dbReference type="FunFam" id="3.40.720.10:FF:000036">
    <property type="entry name" value="Membrane-associated phospholipase C"/>
    <property type="match status" value="1"/>
</dbReference>
<dbReference type="Gene3D" id="3.40.720.10">
    <property type="entry name" value="Alkaline Phosphatase, subunit A"/>
    <property type="match status" value="2"/>
</dbReference>
<dbReference type="InterPro" id="IPR017850">
    <property type="entry name" value="Alkaline_phosphatase_core_sf"/>
</dbReference>
<dbReference type="InterPro" id="IPR017767">
    <property type="entry name" value="PC-PLC"/>
</dbReference>
<dbReference type="InterPro" id="IPR007312">
    <property type="entry name" value="Phosphoesterase"/>
</dbReference>
<dbReference type="InterPro" id="IPR008475">
    <property type="entry name" value="PLipase_C_C"/>
</dbReference>
<dbReference type="InterPro" id="IPR006311">
    <property type="entry name" value="TAT_signal"/>
</dbReference>
<dbReference type="NCBIfam" id="TIGR03396">
    <property type="entry name" value="PC_PLC"/>
    <property type="match status" value="1"/>
</dbReference>
<dbReference type="PANTHER" id="PTHR31956:SF36">
    <property type="entry name" value="NON-HEMOLYTIC PHOSPHOLIPASE C"/>
    <property type="match status" value="1"/>
</dbReference>
<dbReference type="PANTHER" id="PTHR31956">
    <property type="entry name" value="NON-SPECIFIC PHOSPHOLIPASE C4-RELATED"/>
    <property type="match status" value="1"/>
</dbReference>
<dbReference type="Pfam" id="PF04185">
    <property type="entry name" value="Phosphoesterase"/>
    <property type="match status" value="1"/>
</dbReference>
<dbReference type="Pfam" id="PF05506">
    <property type="entry name" value="PLipase_C_C"/>
    <property type="match status" value="2"/>
</dbReference>
<dbReference type="PROSITE" id="PS51318">
    <property type="entry name" value="TAT"/>
    <property type="match status" value="1"/>
</dbReference>
<evidence type="ECO:0000255" key="1">
    <source>
        <dbReference type="PROSITE-ProRule" id="PRU00648"/>
    </source>
</evidence>
<evidence type="ECO:0000305" key="2"/>
<comment type="function">
    <text>Hydrolyzes phosphatidylserine as well as phosphatidylcholine.</text>
</comment>
<comment type="catalytic activity">
    <reaction>
        <text>a 1,2-diacyl-sn-glycero-3-phosphocholine + H2O = phosphocholine + a 1,2-diacyl-sn-glycerol + H(+)</text>
        <dbReference type="Rhea" id="RHEA:10604"/>
        <dbReference type="ChEBI" id="CHEBI:15377"/>
        <dbReference type="ChEBI" id="CHEBI:15378"/>
        <dbReference type="ChEBI" id="CHEBI:17815"/>
        <dbReference type="ChEBI" id="CHEBI:57643"/>
        <dbReference type="ChEBI" id="CHEBI:295975"/>
        <dbReference type="EC" id="3.1.4.3"/>
    </reaction>
</comment>
<comment type="PTM">
    <text>Predicted to be exported by the Tat system. The position of the signal peptide cleavage has not been experimentally proven.</text>
</comment>
<comment type="similarity">
    <text evidence="2">Belongs to the bacterial phospholipase C family.</text>
</comment>
<sequence length="692" mass="77145">MISKSRRSFIRLAAGTVGATVATSMLPSSIQAALAIPAHRRHGNLKDVEHVVILMQENRSFDHYFGTLKGVRGFGDRMAIPLPDGQRVWHQKGSKGEILPYHFDTSTTSAQRVDGTPHTWPDAQQAWNEGRMDKWLPAKTERSLGYYKEQDIAFQFAMANAFTICDAYHCSFQGGTNPNRLFLWTGTNDPLGQHGGPVTTNDHDSNGPVEQGYTWTTYPERLQAAGITWRVYQDMADNFSDNPLIGFRQYRAAAPDSPLIVNGLSTWKLDALKRDVLANSLPQVSWIVAPAKYSEHPGPSSPIWGAEYTSWVLDALTANPEVWSKTALLVMFDENDGFFDHVAPPAAPSLNKDGTLRGKTTADATLEWHTKGDIRYRNQPYGLGPRVPMYVISPWSKGGWVNSQVFDHTSVIRFLEQRFGVMEPNISPWRRAVCGDLTSAFNFANPNNEPFPELPDTSQADAIVASQIKLPKPKPPAVAAMPKQEMGIRPARALPYELGVHARYRSGGDALSLTFANTGKAGAVFQVFDLLDSENPPKRYTVGARKRLHDSFQGDASGDYHLEVHGPNGFLRVFRGNLRRDLAERKAPLPEVRIDYEPLFGNLRVQLINRGRHPVKLTVKDNVYRQGERRTVNVPPGQRREVRYSLRSSGNWYDFSVSAQGADSFLRRFSGRMEDGRSGFSDPGMGLGTLTF</sequence>
<feature type="signal peptide" description="Tat-type signal" evidence="1">
    <location>
        <begin position="1"/>
        <end position="35"/>
    </location>
</feature>
<feature type="chain" id="PRO_0000023941" description="Non-hemolytic phospholipase C">
    <location>
        <begin position="36"/>
        <end position="692"/>
    </location>
</feature>
<feature type="sequence conflict" description="In Ref. 1; AAA25968/AAA25969." evidence="2" ref="1">
    <original>G</original>
    <variation>A</variation>
    <location>
        <position position="18"/>
    </location>
</feature>
<feature type="sequence conflict" description="In Ref. 1; AAA25968/AAA25969." evidence="2" ref="1">
    <original>P</original>
    <variation>A</variation>
    <location>
        <position position="385"/>
    </location>
</feature>
<feature type="sequence conflict" description="In Ref. 1; AAA25968/AAA25969." evidence="2" ref="1">
    <original>ER</original>
    <variation>DG</variation>
    <location>
        <begin position="584"/>
        <end position="585"/>
    </location>
</feature>
<proteinExistence type="inferred from homology"/>
<accession>P15713</accession>